<organism>
    <name type="scientific">Bos taurus</name>
    <name type="common">Bovine</name>
    <dbReference type="NCBI Taxonomy" id="9913"/>
    <lineage>
        <taxon>Eukaryota</taxon>
        <taxon>Metazoa</taxon>
        <taxon>Chordata</taxon>
        <taxon>Craniata</taxon>
        <taxon>Vertebrata</taxon>
        <taxon>Euteleostomi</taxon>
        <taxon>Mammalia</taxon>
        <taxon>Eutheria</taxon>
        <taxon>Laurasiatheria</taxon>
        <taxon>Artiodactyla</taxon>
        <taxon>Ruminantia</taxon>
        <taxon>Pecora</taxon>
        <taxon>Bovidae</taxon>
        <taxon>Bovinae</taxon>
        <taxon>Bos</taxon>
    </lineage>
</organism>
<feature type="chain" id="PRO_0000331567" description="Sodium/myo-inositol cotransporter 2">
    <location>
        <begin position="1"/>
        <end position="674"/>
    </location>
</feature>
<feature type="topological domain" description="Extracellular" evidence="4">
    <location>
        <begin position="1"/>
        <end position="25"/>
    </location>
</feature>
<feature type="transmembrane region" description="Helical" evidence="4">
    <location>
        <begin position="26"/>
        <end position="46"/>
    </location>
</feature>
<feature type="topological domain" description="Cytoplasmic" evidence="4">
    <location>
        <begin position="47"/>
        <end position="56"/>
    </location>
</feature>
<feature type="transmembrane region" description="Helical" evidence="4">
    <location>
        <begin position="57"/>
        <end position="77"/>
    </location>
</feature>
<feature type="topological domain" description="Extracellular" evidence="4">
    <location>
        <begin position="78"/>
        <end position="102"/>
    </location>
</feature>
<feature type="transmembrane region" description="Helical" evidence="4">
    <location>
        <begin position="103"/>
        <end position="123"/>
    </location>
</feature>
<feature type="topological domain" description="Cytoplasmic" evidence="4">
    <location>
        <begin position="124"/>
        <end position="140"/>
    </location>
</feature>
<feature type="transmembrane region" description="Helical" evidence="4">
    <location>
        <begin position="141"/>
        <end position="161"/>
    </location>
</feature>
<feature type="topological domain" description="Extracellular" evidence="4">
    <location>
        <begin position="162"/>
        <end position="180"/>
    </location>
</feature>
<feature type="transmembrane region" description="Helical" evidence="4">
    <location>
        <begin position="181"/>
        <end position="201"/>
    </location>
</feature>
<feature type="topological domain" description="Cytoplasmic" evidence="4">
    <location>
        <begin position="202"/>
        <end position="208"/>
    </location>
</feature>
<feature type="transmembrane region" description="Helical" evidence="4">
    <location>
        <begin position="209"/>
        <end position="229"/>
    </location>
</feature>
<feature type="topological domain" description="Extracellular" evidence="4">
    <location>
        <begin position="230"/>
        <end position="272"/>
    </location>
</feature>
<feature type="transmembrane region" description="Helical" evidence="4">
    <location>
        <begin position="273"/>
        <end position="293"/>
    </location>
</feature>
<feature type="topological domain" description="Cytoplasmic" evidence="4">
    <location>
        <begin position="294"/>
        <end position="308"/>
    </location>
</feature>
<feature type="transmembrane region" description="Helical" evidence="4">
    <location>
        <begin position="309"/>
        <end position="329"/>
    </location>
</feature>
<feature type="topological domain" description="Extracellular" evidence="4">
    <location>
        <begin position="330"/>
        <end position="374"/>
    </location>
</feature>
<feature type="transmembrane region" description="Helical" evidence="4">
    <location>
        <begin position="375"/>
        <end position="397"/>
    </location>
</feature>
<feature type="topological domain" description="Cytoplasmic" evidence="4">
    <location>
        <begin position="398"/>
        <end position="418"/>
    </location>
</feature>
<feature type="transmembrane region" description="Helical" evidence="4">
    <location>
        <begin position="419"/>
        <end position="439"/>
    </location>
</feature>
<feature type="topological domain" description="Extracellular" evidence="4">
    <location>
        <begin position="440"/>
        <end position="446"/>
    </location>
</feature>
<feature type="transmembrane region" description="Helical" evidence="4">
    <location>
        <begin position="447"/>
        <end position="467"/>
    </location>
</feature>
<feature type="topological domain" description="Cytoplasmic" evidence="4">
    <location>
        <begin position="468"/>
        <end position="479"/>
    </location>
</feature>
<feature type="transmembrane region" description="Helical" evidence="4">
    <location>
        <begin position="480"/>
        <end position="500"/>
    </location>
</feature>
<feature type="topological domain" description="Extracellular" evidence="4">
    <location>
        <begin position="501"/>
        <end position="521"/>
    </location>
</feature>
<feature type="transmembrane region" description="Helical" evidence="4">
    <location>
        <begin position="522"/>
        <end position="542"/>
    </location>
</feature>
<feature type="topological domain" description="Cytoplasmic" evidence="4">
    <location>
        <begin position="543"/>
        <end position="653"/>
    </location>
</feature>
<feature type="transmembrane region" description="Helical" evidence="4">
    <location>
        <begin position="654"/>
        <end position="674"/>
    </location>
</feature>
<feature type="region of interest" description="Disordered" evidence="5">
    <location>
        <begin position="567"/>
        <end position="589"/>
    </location>
</feature>
<feature type="compositionally biased region" description="Polar residues" evidence="5">
    <location>
        <begin position="578"/>
        <end position="589"/>
    </location>
</feature>
<proteinExistence type="evidence at transcript level"/>
<gene>
    <name evidence="6" type="primary">SLC5A11</name>
    <name evidence="1" type="synonym">SMIT2</name>
</gene>
<name>SC5AB_BOVIN</name>
<sequence>MESSASSPPLTQSDPLEAFPRRTLEAGDIAVLVLYFLFVLAVGLWSTVKTKRDTVKGYFLAGGNMLWWPVGASLFASNVGSGHFVGLAGSGAAAGLSVTAYELNGLFFVLMLSWIFLPIYITGQVTTMPEYLRKRFGGNRIPIILAVLYLFIYIFTKISVDMYAGAIFIQQSLHVNLYLAIVGLLAVTALYTIAGGLAAVIYTDALQTLIMLIGALILMGYSFAAVGGLEGLEEKYFLAMASNRSGNSSCGLPREDAFHIFRDPVTSDLPWPGILFGMSIPSLWYWCTDQVIVQRTLAAKNLSHAKGGSLMAAYLKVLPLFIMVFPGMVSRVLFPDEVACADPEICRKVCSNPAGCSDIAYPKLVLELLPTGLRGLMMAVMVAALTSSLTSIFNSASTIFTMDLWNHLRPRASEKELMIVGRVFVLLLVLVSILWIPVVQASQGGQLFIYIQSISSYLQPPVAVVFIMGCFWKRANEKGAFFGLVLGLLLGLVRLILDFIYVQPRCDQLDERPAVVKDVHYLYFSMILSSVTLITVCAVSWFTEPPSKEMVSRLTWFTRHDPVVQKEQVPSATPPPLTLSQNGTPEASGTNTQFEMVQENLSKTHSCDMTTKRSKVVKAILWLCGVENKGKEQAPSRADPIIVSLEENPLVKTLLDLNLIICISCAIFLWGYFA</sequence>
<dbReference type="EMBL" id="BC102962">
    <property type="protein sequence ID" value="AAI02963.1"/>
    <property type="molecule type" value="mRNA"/>
</dbReference>
<dbReference type="RefSeq" id="NP_001029832.1">
    <property type="nucleotide sequence ID" value="NM_001034660.3"/>
</dbReference>
<dbReference type="RefSeq" id="XP_005224816.1">
    <property type="nucleotide sequence ID" value="XM_005224759.3"/>
</dbReference>
<dbReference type="SMR" id="Q3ZC26"/>
<dbReference type="FunCoup" id="Q3ZC26">
    <property type="interactions" value="61"/>
</dbReference>
<dbReference type="STRING" id="9913.ENSBTAP00000004510"/>
<dbReference type="PaxDb" id="9913-ENSBTAP00000004510"/>
<dbReference type="GeneID" id="539084"/>
<dbReference type="KEGG" id="bta:539084"/>
<dbReference type="CTD" id="115584"/>
<dbReference type="eggNOG" id="KOG2349">
    <property type="taxonomic scope" value="Eukaryota"/>
</dbReference>
<dbReference type="HOGENOM" id="CLU_018808_9_2_1"/>
<dbReference type="InParanoid" id="Q3ZC26"/>
<dbReference type="OrthoDB" id="6132759at2759"/>
<dbReference type="TreeFam" id="TF352855"/>
<dbReference type="Proteomes" id="UP000009136">
    <property type="component" value="Unplaced"/>
</dbReference>
<dbReference type="GO" id="GO:0016324">
    <property type="term" value="C:apical plasma membrane"/>
    <property type="evidence" value="ECO:0007669"/>
    <property type="project" value="UniProtKB-SubCell"/>
</dbReference>
<dbReference type="GO" id="GO:0005886">
    <property type="term" value="C:plasma membrane"/>
    <property type="evidence" value="ECO:0000250"/>
    <property type="project" value="UniProtKB"/>
</dbReference>
<dbReference type="GO" id="GO:0005412">
    <property type="term" value="F:D-glucose:sodium symporter activity"/>
    <property type="evidence" value="ECO:0000318"/>
    <property type="project" value="GO_Central"/>
</dbReference>
<dbReference type="GO" id="GO:0005365">
    <property type="term" value="F:myo-inositol transmembrane transporter activity"/>
    <property type="evidence" value="ECO:0000250"/>
    <property type="project" value="UniProtKB"/>
</dbReference>
<dbReference type="GO" id="GO:0006915">
    <property type="term" value="P:apoptotic process"/>
    <property type="evidence" value="ECO:0007669"/>
    <property type="project" value="UniProtKB-KW"/>
</dbReference>
<dbReference type="GO" id="GO:0015798">
    <property type="term" value="P:myo-inositol transport"/>
    <property type="evidence" value="ECO:0000250"/>
    <property type="project" value="UniProtKB"/>
</dbReference>
<dbReference type="FunFam" id="1.20.1730.10:FF:000012">
    <property type="entry name" value="sodium/myo-inositol cotransporter 2 isoform X1"/>
    <property type="match status" value="1"/>
</dbReference>
<dbReference type="Gene3D" id="1.20.1730.10">
    <property type="entry name" value="Sodium/glucose cotransporter"/>
    <property type="match status" value="1"/>
</dbReference>
<dbReference type="InterPro" id="IPR038377">
    <property type="entry name" value="Na/Glc_symporter_sf"/>
</dbReference>
<dbReference type="InterPro" id="IPR001734">
    <property type="entry name" value="Na/solute_symporter"/>
</dbReference>
<dbReference type="NCBIfam" id="TIGR00813">
    <property type="entry name" value="sss"/>
    <property type="match status" value="1"/>
</dbReference>
<dbReference type="PANTHER" id="PTHR11819:SF171">
    <property type="entry name" value="SODIUM_MYO-INOSITOL COTRANSPORTER 2"/>
    <property type="match status" value="1"/>
</dbReference>
<dbReference type="PANTHER" id="PTHR11819">
    <property type="entry name" value="SOLUTE CARRIER FAMILY 5"/>
    <property type="match status" value="1"/>
</dbReference>
<dbReference type="Pfam" id="PF00474">
    <property type="entry name" value="SSF"/>
    <property type="match status" value="1"/>
</dbReference>
<dbReference type="PROSITE" id="PS50283">
    <property type="entry name" value="NA_SOLUT_SYMP_3"/>
    <property type="match status" value="1"/>
</dbReference>
<reference evidence="6" key="1">
    <citation type="submission" date="2005-08" db="EMBL/GenBank/DDBJ databases">
        <authorList>
            <consortium name="NIH - Mammalian Gene Collection (MGC) project"/>
        </authorList>
    </citation>
    <scope>NUCLEOTIDE SEQUENCE [LARGE SCALE MRNA]</scope>
    <source>
        <strain evidence="6">Crossbred X Angus</strain>
        <tissue evidence="6">Ileum</tissue>
    </source>
</reference>
<keyword id="KW-0053">Apoptosis</keyword>
<keyword id="KW-1003">Cell membrane</keyword>
<keyword id="KW-0406">Ion transport</keyword>
<keyword id="KW-0472">Membrane</keyword>
<keyword id="KW-1185">Reference proteome</keyword>
<keyword id="KW-0915">Sodium</keyword>
<keyword id="KW-0739">Sodium transport</keyword>
<keyword id="KW-0762">Sugar transport</keyword>
<keyword id="KW-0769">Symport</keyword>
<keyword id="KW-0812">Transmembrane</keyword>
<keyword id="KW-1133">Transmembrane helix</keyword>
<keyword id="KW-0813">Transport</keyword>
<comment type="function">
    <text evidence="1 2">Involved in the sodium-dependent cotransport of myo-inositol (MI) with a Na(+):MI stoichiometry of 2:1. Exclusively responsible for apical MI transport and absorption in intestine. Can also transport D-chiro-inositol (DCI) but not L-fucose (By similarity). Exhibits stereospecific cotransport of both D-glucose and D-xylose (By similarity). May induce apoptosis through the TNF-alpha, PDCD1 pathway (By similarity). May play a role in the regulation of MI concentration in serum, involving reabsorption in at least the proximal tubule of the kidney (By similarity).</text>
</comment>
<comment type="catalytic activity">
    <reaction evidence="2">
        <text>myo-inositol(out) + 2 Na(+)(out) = myo-inositol(in) + 2 Na(+)(in)</text>
        <dbReference type="Rhea" id="RHEA:72987"/>
        <dbReference type="ChEBI" id="CHEBI:17268"/>
        <dbReference type="ChEBI" id="CHEBI:29101"/>
    </reaction>
</comment>
<comment type="catalytic activity">
    <reaction evidence="2">
        <text>1D-chiro-inositol(out) + 2 Na(+)(out) = 1D-chiro-inositol(in) + 2 Na(+)(in)</text>
        <dbReference type="Rhea" id="RHEA:73315"/>
        <dbReference type="ChEBI" id="CHEBI:27372"/>
        <dbReference type="ChEBI" id="CHEBI:29101"/>
    </reaction>
</comment>
<comment type="catalytic activity">
    <reaction evidence="1">
        <text>D-glucose(out) + 2 Na(+)(out) = D-glucose(in) + 2 Na(+)(in)</text>
        <dbReference type="Rhea" id="RHEA:70495"/>
        <dbReference type="ChEBI" id="CHEBI:4167"/>
        <dbReference type="ChEBI" id="CHEBI:29101"/>
    </reaction>
</comment>
<comment type="catalytic activity">
    <reaction evidence="1">
        <text>D-xylose(out) + 2 Na(+)(out) = D-xylose(in) + 2 Na(+)(in)</text>
        <dbReference type="Rhea" id="RHEA:73367"/>
        <dbReference type="ChEBI" id="CHEBI:29101"/>
        <dbReference type="ChEBI" id="CHEBI:53455"/>
    </reaction>
</comment>
<comment type="activity regulation">
    <text evidence="2 3">MI transport activity inhibited by D-chiro-inositol (DCI), phlorizin (Pz) and sodium (Na(+)) (By similarity). Insulin increases D-chiro-inositol uptake (By similarity).</text>
</comment>
<comment type="subcellular location">
    <subcellularLocation>
        <location evidence="3">Membrane</location>
        <topology evidence="3">Multi-pass membrane protein</topology>
    </subcellularLocation>
    <subcellularLocation>
        <location evidence="3">Apical cell membrane</location>
        <topology evidence="3">Multi-pass membrane protein</topology>
    </subcellularLocation>
    <text evidence="1 3">Located on apical membrane of enterocytes (By similarity). Located on membrane of kidney brush border membrane vesicles (BBMVs) and apical membrane of proximal convoluted tubules (By similarity).</text>
</comment>
<comment type="similarity">
    <text evidence="4">Belongs to the sodium:solute symporter (SSF) (TC 2.A.21) family.</text>
</comment>
<evidence type="ECO:0000250" key="1">
    <source>
        <dbReference type="UniProtKB" id="Q28728"/>
    </source>
</evidence>
<evidence type="ECO:0000250" key="2">
    <source>
        <dbReference type="UniProtKB" id="Q8WWX8"/>
    </source>
</evidence>
<evidence type="ECO:0000250" key="3">
    <source>
        <dbReference type="UniProtKB" id="Q9Z1F2"/>
    </source>
</evidence>
<evidence type="ECO:0000255" key="4"/>
<evidence type="ECO:0000256" key="5">
    <source>
        <dbReference type="SAM" id="MobiDB-lite"/>
    </source>
</evidence>
<evidence type="ECO:0000312" key="6">
    <source>
        <dbReference type="EMBL" id="AAI02963.1"/>
    </source>
</evidence>
<accession>Q3ZC26</accession>
<protein>
    <recommendedName>
        <fullName>Sodium/myo-inositol cotransporter 2</fullName>
        <shortName>Na(+)/myo-inositol cotransporter 2</shortName>
    </recommendedName>
    <alternativeName>
        <fullName>Sodium/myo-inositol transporter 2</fullName>
        <shortName>SMIT2</shortName>
    </alternativeName>
    <alternativeName>
        <fullName>Solute carrier family 5 member 11</fullName>
    </alternativeName>
</protein>